<reference key="1">
    <citation type="submission" date="2008-06" db="EMBL/GenBank/DDBJ databases">
        <title>Complete sequence of chromosome of Prosthecochloris aestuarii DSM 271.</title>
        <authorList>
            <consortium name="US DOE Joint Genome Institute"/>
            <person name="Lucas S."/>
            <person name="Copeland A."/>
            <person name="Lapidus A."/>
            <person name="Glavina del Rio T."/>
            <person name="Dalin E."/>
            <person name="Tice H."/>
            <person name="Bruce D."/>
            <person name="Goodwin L."/>
            <person name="Pitluck S."/>
            <person name="Schmutz J."/>
            <person name="Larimer F."/>
            <person name="Land M."/>
            <person name="Hauser L."/>
            <person name="Kyrpides N."/>
            <person name="Anderson I."/>
            <person name="Liu Z."/>
            <person name="Li T."/>
            <person name="Zhao F."/>
            <person name="Overmann J."/>
            <person name="Bryant D.A."/>
            <person name="Richardson P."/>
        </authorList>
    </citation>
    <scope>NUCLEOTIDE SEQUENCE [LARGE SCALE GENOMIC DNA]</scope>
    <source>
        <strain>DSM 271 / SK 413</strain>
    </source>
</reference>
<protein>
    <recommendedName>
        <fullName evidence="1">Translation initiation factor IF-3</fullName>
    </recommendedName>
</protein>
<feature type="chain" id="PRO_1000117103" description="Translation initiation factor IF-3">
    <location>
        <begin position="1"/>
        <end position="197"/>
    </location>
</feature>
<name>IF3_PROA2</name>
<keyword id="KW-0963">Cytoplasm</keyword>
<keyword id="KW-0396">Initiation factor</keyword>
<keyword id="KW-0648">Protein biosynthesis</keyword>
<comment type="function">
    <text evidence="1">IF-3 binds to the 30S ribosomal subunit and shifts the equilibrium between 70S ribosomes and their 50S and 30S subunits in favor of the free subunits, thus enhancing the availability of 30S subunits on which protein synthesis initiation begins.</text>
</comment>
<comment type="subunit">
    <text evidence="1">Monomer.</text>
</comment>
<comment type="subcellular location">
    <subcellularLocation>
        <location evidence="1">Cytoplasm</location>
    </subcellularLocation>
</comment>
<comment type="similarity">
    <text evidence="1">Belongs to the IF-3 family.</text>
</comment>
<proteinExistence type="inferred from homology"/>
<organism>
    <name type="scientific">Prosthecochloris aestuarii (strain DSM 271 / SK 413)</name>
    <dbReference type="NCBI Taxonomy" id="290512"/>
    <lineage>
        <taxon>Bacteria</taxon>
        <taxon>Pseudomonadati</taxon>
        <taxon>Chlorobiota</taxon>
        <taxon>Chlorobiia</taxon>
        <taxon>Chlorobiales</taxon>
        <taxon>Chlorobiaceae</taxon>
        <taxon>Prosthecochloris</taxon>
    </lineage>
</organism>
<gene>
    <name evidence="1" type="primary">infC</name>
    <name type="ordered locus">Paes_0166</name>
</gene>
<dbReference type="EMBL" id="CP001108">
    <property type="protein sequence ID" value="ACF45225.1"/>
    <property type="molecule type" value="Genomic_DNA"/>
</dbReference>
<dbReference type="RefSeq" id="WP_012504762.1">
    <property type="nucleotide sequence ID" value="NC_011059.1"/>
</dbReference>
<dbReference type="SMR" id="B4S3D1"/>
<dbReference type="STRING" id="290512.Paes_0166"/>
<dbReference type="KEGG" id="paa:Paes_0166"/>
<dbReference type="eggNOG" id="COG0290">
    <property type="taxonomic scope" value="Bacteria"/>
</dbReference>
<dbReference type="HOGENOM" id="CLU_054919_3_0_10"/>
<dbReference type="Proteomes" id="UP000002725">
    <property type="component" value="Chromosome"/>
</dbReference>
<dbReference type="GO" id="GO:0005737">
    <property type="term" value="C:cytoplasm"/>
    <property type="evidence" value="ECO:0007669"/>
    <property type="project" value="UniProtKB-SubCell"/>
</dbReference>
<dbReference type="GO" id="GO:0043022">
    <property type="term" value="F:ribosome binding"/>
    <property type="evidence" value="ECO:0007669"/>
    <property type="project" value="TreeGrafter"/>
</dbReference>
<dbReference type="GO" id="GO:0003743">
    <property type="term" value="F:translation initiation factor activity"/>
    <property type="evidence" value="ECO:0007669"/>
    <property type="project" value="UniProtKB-UniRule"/>
</dbReference>
<dbReference type="GO" id="GO:0032790">
    <property type="term" value="P:ribosome disassembly"/>
    <property type="evidence" value="ECO:0007669"/>
    <property type="project" value="TreeGrafter"/>
</dbReference>
<dbReference type="Gene3D" id="3.30.110.10">
    <property type="entry name" value="Translation initiation factor 3 (IF-3), C-terminal domain"/>
    <property type="match status" value="1"/>
</dbReference>
<dbReference type="Gene3D" id="3.10.20.80">
    <property type="entry name" value="Translation initiation factor 3 (IF-3), N-terminal domain"/>
    <property type="match status" value="1"/>
</dbReference>
<dbReference type="HAMAP" id="MF_00080">
    <property type="entry name" value="IF_3"/>
    <property type="match status" value="1"/>
</dbReference>
<dbReference type="InterPro" id="IPR036788">
    <property type="entry name" value="T_IF-3_C_sf"/>
</dbReference>
<dbReference type="InterPro" id="IPR036787">
    <property type="entry name" value="T_IF-3_N_sf"/>
</dbReference>
<dbReference type="InterPro" id="IPR001288">
    <property type="entry name" value="Translation_initiation_fac_3"/>
</dbReference>
<dbReference type="InterPro" id="IPR019815">
    <property type="entry name" value="Translation_initiation_fac_3_C"/>
</dbReference>
<dbReference type="InterPro" id="IPR019814">
    <property type="entry name" value="Translation_initiation_fac_3_N"/>
</dbReference>
<dbReference type="NCBIfam" id="TIGR00168">
    <property type="entry name" value="infC"/>
    <property type="match status" value="1"/>
</dbReference>
<dbReference type="PANTHER" id="PTHR10938">
    <property type="entry name" value="TRANSLATION INITIATION FACTOR IF-3"/>
    <property type="match status" value="1"/>
</dbReference>
<dbReference type="PANTHER" id="PTHR10938:SF0">
    <property type="entry name" value="TRANSLATION INITIATION FACTOR IF-3, MITOCHONDRIAL"/>
    <property type="match status" value="1"/>
</dbReference>
<dbReference type="Pfam" id="PF00707">
    <property type="entry name" value="IF3_C"/>
    <property type="match status" value="1"/>
</dbReference>
<dbReference type="Pfam" id="PF05198">
    <property type="entry name" value="IF3_N"/>
    <property type="match status" value="1"/>
</dbReference>
<dbReference type="SUPFAM" id="SSF55200">
    <property type="entry name" value="Translation initiation factor IF3, C-terminal domain"/>
    <property type="match status" value="1"/>
</dbReference>
<dbReference type="SUPFAM" id="SSF54364">
    <property type="entry name" value="Translation initiation factor IF3, N-terminal domain"/>
    <property type="match status" value="1"/>
</dbReference>
<accession>B4S3D1</accession>
<sequence length="197" mass="23265">MRKKRSAPQKPKLTYRVNEQIRVPEVRVVFKDGSQEILKTGEARKMAEQEGLDLIEVQPTAQPPVCKMDNYGKLQYKLDKNEKDRKKKSKPTELKELRFHPNTDTHDFDFKSAHLEEFLRKGNRVRATIVFLGRSIIYKDKGFELVERLKERLSNVSNPEGEAKFEGKRLFIYFEPDKKKIEIFERQLAKMKPEEKP</sequence>
<evidence type="ECO:0000255" key="1">
    <source>
        <dbReference type="HAMAP-Rule" id="MF_00080"/>
    </source>
</evidence>